<keyword id="KW-0067">ATP-binding</keyword>
<keyword id="KW-0143">Chaperone</keyword>
<keyword id="KW-0963">Cytoplasm</keyword>
<keyword id="KW-0903">Direct protein sequencing</keyword>
<keyword id="KW-0413">Isomerase</keyword>
<keyword id="KW-0547">Nucleotide-binding</keyword>
<accession>P80673</accession>
<gene>
    <name evidence="1" type="primary">groEL</name>
    <name evidence="1" type="synonym">groL</name>
    <name type="synonym">mopA</name>
</gene>
<evidence type="ECO:0000255" key="1">
    <source>
        <dbReference type="HAMAP-Rule" id="MF_00600"/>
    </source>
</evidence>
<evidence type="ECO:0000305" key="2"/>
<proteinExistence type="evidence at protein level"/>
<dbReference type="EC" id="5.6.1.7" evidence="1"/>
<dbReference type="SMR" id="P80673"/>
<dbReference type="eggNOG" id="COG0459">
    <property type="taxonomic scope" value="Bacteria"/>
</dbReference>
<dbReference type="GO" id="GO:0005737">
    <property type="term" value="C:cytoplasm"/>
    <property type="evidence" value="ECO:0007669"/>
    <property type="project" value="UniProtKB-SubCell"/>
</dbReference>
<dbReference type="GO" id="GO:0005524">
    <property type="term" value="F:ATP binding"/>
    <property type="evidence" value="ECO:0007669"/>
    <property type="project" value="UniProtKB-KW"/>
</dbReference>
<dbReference type="GO" id="GO:0016853">
    <property type="term" value="F:isomerase activity"/>
    <property type="evidence" value="ECO:0007669"/>
    <property type="project" value="UniProtKB-KW"/>
</dbReference>
<feature type="chain" id="PRO_0000063450" description="Chaperonin GroEL">
    <location>
        <begin position="1"/>
        <end position="28" status="greater than"/>
    </location>
</feature>
<feature type="non-terminal residue">
    <location>
        <position position="28"/>
    </location>
</feature>
<comment type="function">
    <text evidence="1">Together with its co-chaperonin GroES, plays an essential role in assisting protein folding. The GroEL-GroES system forms a nano-cage that allows encapsulation of the non-native substrate proteins and provides a physical environment optimized to promote and accelerate protein folding.</text>
</comment>
<comment type="catalytic activity">
    <reaction evidence="1">
        <text>ATP + H2O + a folded polypeptide = ADP + phosphate + an unfolded polypeptide.</text>
        <dbReference type="EC" id="5.6.1.7"/>
    </reaction>
</comment>
<comment type="subunit">
    <text evidence="1">Forms a cylinder of 14 subunits composed of two heptameric rings stacked back-to-back. Interacts with the co-chaperonin GroES.</text>
</comment>
<comment type="subcellular location">
    <subcellularLocation>
        <location evidence="1">Cytoplasm</location>
    </subcellularLocation>
</comment>
<comment type="similarity">
    <text evidence="1 2">Belongs to the chaperonin (HSP60) family.</text>
</comment>
<organism>
    <name type="scientific">Mycolicibacterium smegmatis</name>
    <name type="common">Mycobacterium smegmatis</name>
    <dbReference type="NCBI Taxonomy" id="1772"/>
    <lineage>
        <taxon>Bacteria</taxon>
        <taxon>Bacillati</taxon>
        <taxon>Actinomycetota</taxon>
        <taxon>Actinomycetes</taxon>
        <taxon>Mycobacteriales</taxon>
        <taxon>Mycobacteriaceae</taxon>
        <taxon>Mycolicibacterium</taxon>
    </lineage>
</organism>
<sequence>AKTIAYDEEARRGLERGLNSLADAVKVT</sequence>
<protein>
    <recommendedName>
        <fullName evidence="1">Chaperonin GroEL</fullName>
        <ecNumber evidence="1">5.6.1.7</ecNumber>
    </recommendedName>
    <alternativeName>
        <fullName evidence="1">60 kDa chaperonin</fullName>
    </alternativeName>
    <alternativeName>
        <fullName evidence="1">Chaperonin-60</fullName>
        <shortName evidence="1">Cpn60</shortName>
    </alternativeName>
</protein>
<reference key="1">
    <citation type="journal article" date="1997" name="BioMetals">
        <title>Enhanced hydrogen peroxide sensitivity and altered stress protein expression in iron-starved Mycobacterium smegmatis.</title>
        <authorList>
            <person name="Lundrigan M.D."/>
            <person name="Arceneaux J.E.L."/>
            <person name="Zhu W."/>
            <person name="Byers B.R."/>
        </authorList>
    </citation>
    <scope>PROTEIN SEQUENCE</scope>
    <source>
        <strain>ATCC 607 / DSM 43465 / JCM 20379 / NBRC 3207 / NRRL B-692</strain>
    </source>
</reference>
<name>CH60_MYCSM</name>